<protein>
    <recommendedName>
        <fullName evidence="1">Large ribosomal subunit protein uL11B</fullName>
    </recommendedName>
    <alternativeName>
        <fullName evidence="2">50S ribosomal protein L11-2</fullName>
    </alternativeName>
</protein>
<comment type="function">
    <text evidence="1">Forms part of the ribosomal stalk which helps the ribosome interact with GTP-bound translation factors.</text>
</comment>
<comment type="subunit">
    <text evidence="1">Part of the ribosomal stalk of the 50S ribosomal subunit. Interacts with L10 and the large rRNA to form the base of the stalk. L10 forms an elongated spine to which L12 dimers bind in a sequential fashion forming a multimeric L10(L12)X complex.</text>
</comment>
<comment type="PTM">
    <text evidence="1">One or more lysine residues are methylated.</text>
</comment>
<comment type="similarity">
    <text evidence="1">Belongs to the universal ribosomal protein uL11 family.</text>
</comment>
<proteinExistence type="inferred from homology"/>
<gene>
    <name evidence="1" type="primary">rplK2</name>
    <name type="ordered locus">BH0409</name>
</gene>
<dbReference type="EMBL" id="BA000004">
    <property type="protein sequence ID" value="BAB04128.1"/>
    <property type="molecule type" value="Genomic_DNA"/>
</dbReference>
<dbReference type="PIR" id="A83701">
    <property type="entry name" value="A83701"/>
</dbReference>
<dbReference type="RefSeq" id="WP_010896587.1">
    <property type="nucleotide sequence ID" value="NC_002570.2"/>
</dbReference>
<dbReference type="SMR" id="Q9KFR8"/>
<dbReference type="STRING" id="272558.gene:10726262"/>
<dbReference type="KEGG" id="bha:BH0409"/>
<dbReference type="eggNOG" id="COG0080">
    <property type="taxonomic scope" value="Bacteria"/>
</dbReference>
<dbReference type="HOGENOM" id="CLU_074237_2_2_9"/>
<dbReference type="OrthoDB" id="9802408at2"/>
<dbReference type="Proteomes" id="UP000001258">
    <property type="component" value="Chromosome"/>
</dbReference>
<dbReference type="GO" id="GO:0015934">
    <property type="term" value="C:large ribosomal subunit"/>
    <property type="evidence" value="ECO:0007669"/>
    <property type="project" value="TreeGrafter"/>
</dbReference>
<dbReference type="GO" id="GO:0070180">
    <property type="term" value="F:large ribosomal subunit rRNA binding"/>
    <property type="evidence" value="ECO:0007669"/>
    <property type="project" value="UniProtKB-UniRule"/>
</dbReference>
<dbReference type="GO" id="GO:0003735">
    <property type="term" value="F:structural constituent of ribosome"/>
    <property type="evidence" value="ECO:0007669"/>
    <property type="project" value="InterPro"/>
</dbReference>
<dbReference type="GO" id="GO:0006412">
    <property type="term" value="P:translation"/>
    <property type="evidence" value="ECO:0007669"/>
    <property type="project" value="UniProtKB-UniRule"/>
</dbReference>
<dbReference type="CDD" id="cd00349">
    <property type="entry name" value="Ribosomal_L11"/>
    <property type="match status" value="1"/>
</dbReference>
<dbReference type="FunFam" id="1.10.10.250:FF:000001">
    <property type="entry name" value="50S ribosomal protein L11"/>
    <property type="match status" value="1"/>
</dbReference>
<dbReference type="Gene3D" id="1.10.10.250">
    <property type="entry name" value="Ribosomal protein L11, C-terminal domain"/>
    <property type="match status" value="1"/>
</dbReference>
<dbReference type="Gene3D" id="3.30.1550.10">
    <property type="entry name" value="Ribosomal protein L11/L12, N-terminal domain"/>
    <property type="match status" value="1"/>
</dbReference>
<dbReference type="HAMAP" id="MF_00736">
    <property type="entry name" value="Ribosomal_uL11"/>
    <property type="match status" value="1"/>
</dbReference>
<dbReference type="InterPro" id="IPR000911">
    <property type="entry name" value="Ribosomal_uL11"/>
</dbReference>
<dbReference type="InterPro" id="IPR006519">
    <property type="entry name" value="Ribosomal_uL11_bac-typ"/>
</dbReference>
<dbReference type="InterPro" id="IPR020783">
    <property type="entry name" value="Ribosomal_uL11_C"/>
</dbReference>
<dbReference type="InterPro" id="IPR036769">
    <property type="entry name" value="Ribosomal_uL11_C_sf"/>
</dbReference>
<dbReference type="InterPro" id="IPR020785">
    <property type="entry name" value="Ribosomal_uL11_CS"/>
</dbReference>
<dbReference type="InterPro" id="IPR020784">
    <property type="entry name" value="Ribosomal_uL11_N"/>
</dbReference>
<dbReference type="InterPro" id="IPR036796">
    <property type="entry name" value="Ribosomal_uL11_N_sf"/>
</dbReference>
<dbReference type="NCBIfam" id="TIGR01632">
    <property type="entry name" value="L11_bact"/>
    <property type="match status" value="1"/>
</dbReference>
<dbReference type="PANTHER" id="PTHR11661">
    <property type="entry name" value="60S RIBOSOMAL PROTEIN L12"/>
    <property type="match status" value="1"/>
</dbReference>
<dbReference type="PANTHER" id="PTHR11661:SF1">
    <property type="entry name" value="LARGE RIBOSOMAL SUBUNIT PROTEIN UL11M"/>
    <property type="match status" value="1"/>
</dbReference>
<dbReference type="Pfam" id="PF00298">
    <property type="entry name" value="Ribosomal_L11"/>
    <property type="match status" value="1"/>
</dbReference>
<dbReference type="Pfam" id="PF03946">
    <property type="entry name" value="Ribosomal_L11_N"/>
    <property type="match status" value="1"/>
</dbReference>
<dbReference type="SMART" id="SM00649">
    <property type="entry name" value="RL11"/>
    <property type="match status" value="1"/>
</dbReference>
<dbReference type="SUPFAM" id="SSF54747">
    <property type="entry name" value="Ribosomal L11/L12e N-terminal domain"/>
    <property type="match status" value="1"/>
</dbReference>
<dbReference type="SUPFAM" id="SSF46906">
    <property type="entry name" value="Ribosomal protein L11, C-terminal domain"/>
    <property type="match status" value="1"/>
</dbReference>
<dbReference type="PROSITE" id="PS00359">
    <property type="entry name" value="RIBOSOMAL_L11"/>
    <property type="match status" value="1"/>
</dbReference>
<evidence type="ECO:0000255" key="1">
    <source>
        <dbReference type="HAMAP-Rule" id="MF_00736"/>
    </source>
</evidence>
<evidence type="ECO:0000305" key="2"/>
<name>RL11B_HALH5</name>
<sequence length="141" mass="15267">MEKVIKQIVTINLEAGKANPAKVGKDLAPTGINLLGFCNQYNEMTKLQLGLVVPAKITIYEDRSFNVKLKTPPAAFLLKKYAGVEKGAAQPGKEVVGSITTQQLRTIAEIKLPDLNTTSIDRAMKIIAGTARNMGINIEDD</sequence>
<accession>Q9KFR8</accession>
<feature type="chain" id="PRO_0000104241" description="Large ribosomal subunit protein uL11B">
    <location>
        <begin position="1"/>
        <end position="141"/>
    </location>
</feature>
<organism>
    <name type="scientific">Halalkalibacterium halodurans (strain ATCC BAA-125 / DSM 18197 / FERM 7344 / JCM 9153 / C-125)</name>
    <name type="common">Bacillus halodurans</name>
    <dbReference type="NCBI Taxonomy" id="272558"/>
    <lineage>
        <taxon>Bacteria</taxon>
        <taxon>Bacillati</taxon>
        <taxon>Bacillota</taxon>
        <taxon>Bacilli</taxon>
        <taxon>Bacillales</taxon>
        <taxon>Bacillaceae</taxon>
        <taxon>Halalkalibacterium (ex Joshi et al. 2022)</taxon>
    </lineage>
</organism>
<keyword id="KW-0488">Methylation</keyword>
<keyword id="KW-1185">Reference proteome</keyword>
<keyword id="KW-0687">Ribonucleoprotein</keyword>
<keyword id="KW-0689">Ribosomal protein</keyword>
<keyword id="KW-0694">RNA-binding</keyword>
<keyword id="KW-0699">rRNA-binding</keyword>
<reference key="1">
    <citation type="journal article" date="2000" name="Nucleic Acids Res.">
        <title>Complete genome sequence of the alkaliphilic bacterium Bacillus halodurans and genomic sequence comparison with Bacillus subtilis.</title>
        <authorList>
            <person name="Takami H."/>
            <person name="Nakasone K."/>
            <person name="Takaki Y."/>
            <person name="Maeno G."/>
            <person name="Sasaki R."/>
            <person name="Masui N."/>
            <person name="Fuji F."/>
            <person name="Hirama C."/>
            <person name="Nakamura Y."/>
            <person name="Ogasawara N."/>
            <person name="Kuhara S."/>
            <person name="Horikoshi K."/>
        </authorList>
    </citation>
    <scope>NUCLEOTIDE SEQUENCE [LARGE SCALE GENOMIC DNA]</scope>
    <source>
        <strain>ATCC BAA-125 / DSM 18197 / FERM 7344 / JCM 9153 / C-125</strain>
    </source>
</reference>